<accession>Q9X0C8</accession>
<comment type="function">
    <text>IGPS catalyzes the conversion of PRFAR and glutamine to IGP, AICAR and glutamate. The HisH subunit catalyzes the hydrolysis of glutamine to glutamate and ammonia as part of the synthesis of IGP and AICAR. The resulting ammonia molecule is channeled to the active site of HisF.</text>
</comment>
<comment type="catalytic activity">
    <reaction>
        <text>5-[(5-phospho-1-deoxy-D-ribulos-1-ylimino)methylamino]-1-(5-phospho-beta-D-ribosyl)imidazole-4-carboxamide + L-glutamine = D-erythro-1-(imidazol-4-yl)glycerol 3-phosphate + 5-amino-1-(5-phospho-beta-D-ribosyl)imidazole-4-carboxamide + L-glutamate + H(+)</text>
        <dbReference type="Rhea" id="RHEA:24793"/>
        <dbReference type="ChEBI" id="CHEBI:15378"/>
        <dbReference type="ChEBI" id="CHEBI:29985"/>
        <dbReference type="ChEBI" id="CHEBI:58278"/>
        <dbReference type="ChEBI" id="CHEBI:58359"/>
        <dbReference type="ChEBI" id="CHEBI:58475"/>
        <dbReference type="ChEBI" id="CHEBI:58525"/>
        <dbReference type="EC" id="4.3.2.10"/>
    </reaction>
</comment>
<comment type="catalytic activity">
    <reaction>
        <text>L-glutamine + H2O = L-glutamate + NH4(+)</text>
        <dbReference type="Rhea" id="RHEA:15889"/>
        <dbReference type="ChEBI" id="CHEBI:15377"/>
        <dbReference type="ChEBI" id="CHEBI:28938"/>
        <dbReference type="ChEBI" id="CHEBI:29985"/>
        <dbReference type="ChEBI" id="CHEBI:58359"/>
        <dbReference type="EC" id="3.5.1.2"/>
    </reaction>
</comment>
<comment type="activity regulation">
    <text>Activated by the binding of either IGP or PRFAR to the active site of HisF.</text>
</comment>
<comment type="biophysicochemical properties">
    <kinetics>
        <KM evidence="1">0.32 mM for glutamine</KM>
    </kinetics>
</comment>
<comment type="pathway">
    <text>Amino-acid biosynthesis; L-histidine biosynthesis; L-histidine from 5-phospho-alpha-D-ribose 1-diphosphate: step 5/9.</text>
</comment>
<comment type="subunit">
    <text>Heterodimer of HisH and HisF.</text>
</comment>
<comment type="interaction">
    <interactant intactId="EBI-9026913">
        <id>Q9X0C8</id>
    </interactant>
    <interactant intactId="EBI-9026911">
        <id>Q9X0C6</id>
        <label>hisF</label>
    </interactant>
    <organismsDiffer>false</organismsDiffer>
    <experiments>2</experiments>
</comment>
<comment type="subcellular location">
    <subcellularLocation>
        <location>Cytoplasm</location>
    </subcellularLocation>
</comment>
<evidence type="ECO:0000269" key="1">
    <source>
    </source>
</evidence>
<evidence type="ECO:0007829" key="2">
    <source>
        <dbReference type="PDB" id="1GPW"/>
    </source>
</evidence>
<evidence type="ECO:0007829" key="3">
    <source>
        <dbReference type="PDB" id="6YMU"/>
    </source>
</evidence>
<evidence type="ECO:0007829" key="4">
    <source>
        <dbReference type="PDB" id="7AC8"/>
    </source>
</evidence>
<dbReference type="EC" id="4.3.2.10"/>
<dbReference type="EC" id="3.5.1.2"/>
<dbReference type="EMBL" id="AE000512">
    <property type="protein sequence ID" value="AAD36115.1"/>
    <property type="molecule type" value="Genomic_DNA"/>
</dbReference>
<dbReference type="PIR" id="E72304">
    <property type="entry name" value="E72304"/>
</dbReference>
<dbReference type="RefSeq" id="NP_228844.1">
    <property type="nucleotide sequence ID" value="NC_000853.1"/>
</dbReference>
<dbReference type="RefSeq" id="WP_004080484.1">
    <property type="nucleotide sequence ID" value="NC_000853.1"/>
</dbReference>
<dbReference type="PDB" id="1GPW">
    <property type="method" value="X-ray"/>
    <property type="resolution" value="2.40 A"/>
    <property type="chains" value="B/D/F=1-201"/>
</dbReference>
<dbReference type="PDB" id="1K9V">
    <property type="method" value="X-ray"/>
    <property type="resolution" value="2.40 A"/>
    <property type="chains" value="F=1-201"/>
</dbReference>
<dbReference type="PDB" id="1KXJ">
    <property type="method" value="X-ray"/>
    <property type="resolution" value="2.80 A"/>
    <property type="chains" value="A/B=1-201"/>
</dbReference>
<dbReference type="PDB" id="2WJZ">
    <property type="method" value="X-ray"/>
    <property type="resolution" value="2.60 A"/>
    <property type="chains" value="B/D/F=1-201"/>
</dbReference>
<dbReference type="PDB" id="3ZR4">
    <property type="method" value="X-ray"/>
    <property type="resolution" value="2.41 A"/>
    <property type="chains" value="B/D/F=1-201"/>
</dbReference>
<dbReference type="PDB" id="6RTZ">
    <property type="method" value="X-ray"/>
    <property type="resolution" value="2.87 A"/>
    <property type="chains" value="B=1-201"/>
</dbReference>
<dbReference type="PDB" id="6RU0">
    <property type="method" value="X-ray"/>
    <property type="resolution" value="2.65 A"/>
    <property type="chains" value="B/D/F=1-201"/>
</dbReference>
<dbReference type="PDB" id="6YMU">
    <property type="method" value="X-ray"/>
    <property type="resolution" value="2.11 A"/>
    <property type="chains" value="B/D/F=1-201"/>
</dbReference>
<dbReference type="PDB" id="7AC8">
    <property type="method" value="X-ray"/>
    <property type="resolution" value="2.06 A"/>
    <property type="chains" value="B/D/F=1-201"/>
</dbReference>
<dbReference type="PDBsum" id="1GPW"/>
<dbReference type="PDBsum" id="1K9V"/>
<dbReference type="PDBsum" id="1KXJ"/>
<dbReference type="PDBsum" id="2WJZ"/>
<dbReference type="PDBsum" id="3ZR4"/>
<dbReference type="PDBsum" id="6RTZ"/>
<dbReference type="PDBsum" id="6RU0"/>
<dbReference type="PDBsum" id="6YMU"/>
<dbReference type="PDBsum" id="7AC8"/>
<dbReference type="SMR" id="Q9X0C8"/>
<dbReference type="DIP" id="DIP-59019N"/>
<dbReference type="FunCoup" id="Q9X0C8">
    <property type="interactions" value="300"/>
</dbReference>
<dbReference type="IntAct" id="Q9X0C8">
    <property type="interactions" value="1"/>
</dbReference>
<dbReference type="STRING" id="243274.TM_1038"/>
<dbReference type="MEROPS" id="C26.965"/>
<dbReference type="PaxDb" id="243274-THEMA_09170"/>
<dbReference type="EnsemblBacteria" id="AAD36115">
    <property type="protein sequence ID" value="AAD36115"/>
    <property type="gene ID" value="TM_1038"/>
</dbReference>
<dbReference type="KEGG" id="tma:TM1038"/>
<dbReference type="KEGG" id="tmi:THEMA_09170"/>
<dbReference type="KEGG" id="tmm:Tmari_1042"/>
<dbReference type="KEGG" id="tmw:THMA_1060"/>
<dbReference type="eggNOG" id="COG0118">
    <property type="taxonomic scope" value="Bacteria"/>
</dbReference>
<dbReference type="InParanoid" id="Q9X0C8"/>
<dbReference type="OrthoDB" id="9807137at2"/>
<dbReference type="BioCyc" id="MetaCyc:MONOMER-468"/>
<dbReference type="BRENDA" id="4.3.1.B2">
    <property type="organism ID" value="6331"/>
</dbReference>
<dbReference type="BRENDA" id="4.3.2.10">
    <property type="organism ID" value="6331"/>
</dbReference>
<dbReference type="SABIO-RK" id="Q9X0C8"/>
<dbReference type="UniPathway" id="UPA00031">
    <property type="reaction ID" value="UER00010"/>
</dbReference>
<dbReference type="EvolutionaryTrace" id="Q9X0C8"/>
<dbReference type="Proteomes" id="UP000008183">
    <property type="component" value="Chromosome"/>
</dbReference>
<dbReference type="GO" id="GO:0005737">
    <property type="term" value="C:cytoplasm"/>
    <property type="evidence" value="ECO:0007669"/>
    <property type="project" value="UniProtKB-SubCell"/>
</dbReference>
<dbReference type="GO" id="GO:0004359">
    <property type="term" value="F:glutaminase activity"/>
    <property type="evidence" value="ECO:0007669"/>
    <property type="project" value="UniProtKB-EC"/>
</dbReference>
<dbReference type="GO" id="GO:0000107">
    <property type="term" value="F:imidazoleglycerol-phosphate synthase activity"/>
    <property type="evidence" value="ECO:0000318"/>
    <property type="project" value="GO_Central"/>
</dbReference>
<dbReference type="GO" id="GO:0016829">
    <property type="term" value="F:lyase activity"/>
    <property type="evidence" value="ECO:0007669"/>
    <property type="project" value="UniProtKB-KW"/>
</dbReference>
<dbReference type="GO" id="GO:0000105">
    <property type="term" value="P:L-histidine biosynthetic process"/>
    <property type="evidence" value="ECO:0007669"/>
    <property type="project" value="UniProtKB-UniRule"/>
</dbReference>
<dbReference type="CDD" id="cd01748">
    <property type="entry name" value="GATase1_IGP_Synthase"/>
    <property type="match status" value="1"/>
</dbReference>
<dbReference type="FunFam" id="3.40.50.880:FF:000178">
    <property type="entry name" value="Imidazole glycerol phosphate synthase subunit HisH"/>
    <property type="match status" value="1"/>
</dbReference>
<dbReference type="Gene3D" id="3.40.50.880">
    <property type="match status" value="1"/>
</dbReference>
<dbReference type="HAMAP" id="MF_00278">
    <property type="entry name" value="HisH"/>
    <property type="match status" value="1"/>
</dbReference>
<dbReference type="InterPro" id="IPR029062">
    <property type="entry name" value="Class_I_gatase-like"/>
</dbReference>
<dbReference type="InterPro" id="IPR017926">
    <property type="entry name" value="GATASE"/>
</dbReference>
<dbReference type="InterPro" id="IPR010139">
    <property type="entry name" value="Imidazole-glycPsynth_HisH"/>
</dbReference>
<dbReference type="NCBIfam" id="TIGR01855">
    <property type="entry name" value="IMP_synth_hisH"/>
    <property type="match status" value="1"/>
</dbReference>
<dbReference type="PANTHER" id="PTHR42701">
    <property type="entry name" value="IMIDAZOLE GLYCEROL PHOSPHATE SYNTHASE SUBUNIT HISH"/>
    <property type="match status" value="1"/>
</dbReference>
<dbReference type="PANTHER" id="PTHR42701:SF1">
    <property type="entry name" value="IMIDAZOLE GLYCEROL PHOSPHATE SYNTHASE SUBUNIT HISH"/>
    <property type="match status" value="1"/>
</dbReference>
<dbReference type="Pfam" id="PF00117">
    <property type="entry name" value="GATase"/>
    <property type="match status" value="1"/>
</dbReference>
<dbReference type="PIRSF" id="PIRSF000495">
    <property type="entry name" value="Amidotransf_hisH"/>
    <property type="match status" value="1"/>
</dbReference>
<dbReference type="SUPFAM" id="SSF52317">
    <property type="entry name" value="Class I glutamine amidotransferase-like"/>
    <property type="match status" value="1"/>
</dbReference>
<dbReference type="PROSITE" id="PS51273">
    <property type="entry name" value="GATASE_TYPE_1"/>
    <property type="match status" value="1"/>
</dbReference>
<protein>
    <recommendedName>
        <fullName>Imidazole glycerol phosphate synthase subunit HisH</fullName>
        <ecNumber>4.3.2.10</ecNumber>
    </recommendedName>
    <alternativeName>
        <fullName>IGP synthase glutaminase subunit</fullName>
        <ecNumber>3.5.1.2</ecNumber>
    </alternativeName>
    <alternativeName>
        <fullName>IGP synthase subunit HisH</fullName>
    </alternativeName>
    <alternativeName>
        <fullName>ImGP synthase subunit HisH</fullName>
        <shortName>IGPS subunit HisH</shortName>
    </alternativeName>
    <alternativeName>
        <fullName>TmHisH</fullName>
    </alternativeName>
</protein>
<proteinExistence type="evidence at protein level"/>
<name>HIS5_THEMA</name>
<sequence length="201" mass="23097">MRIGIISVGPGNIMNLYRGVKRASENFEDVSIELVESPRNDLYDLLFIPGVGHFGEGMRRLRENDLIDFVRKHVEDERYVVGVCLGMQLLFEESEEAPGVKGLSLIEGNVVKLRSRRLPHMGWNEVIFKDTFPNGYYYFVHTYRAVCEEEHVLGTTEYDGEIFPSAVRKGRILGFQFHPEKSSKIGRKLLEKVIECSLSRR</sequence>
<organism>
    <name type="scientific">Thermotoga maritima (strain ATCC 43589 / DSM 3109 / JCM 10099 / NBRC 100826 / MSB8)</name>
    <dbReference type="NCBI Taxonomy" id="243274"/>
    <lineage>
        <taxon>Bacteria</taxon>
        <taxon>Thermotogati</taxon>
        <taxon>Thermotogota</taxon>
        <taxon>Thermotogae</taxon>
        <taxon>Thermotogales</taxon>
        <taxon>Thermotogaceae</taxon>
        <taxon>Thermotoga</taxon>
    </lineage>
</organism>
<keyword id="KW-0002">3D-structure</keyword>
<keyword id="KW-0028">Amino-acid biosynthesis</keyword>
<keyword id="KW-0963">Cytoplasm</keyword>
<keyword id="KW-0903">Direct protein sequencing</keyword>
<keyword id="KW-0315">Glutamine amidotransferase</keyword>
<keyword id="KW-0368">Histidine biosynthesis</keyword>
<keyword id="KW-0378">Hydrolase</keyword>
<keyword id="KW-0456">Lyase</keyword>
<keyword id="KW-1185">Reference proteome</keyword>
<gene>
    <name type="primary">hisH</name>
    <name type="ordered locus">TM_1038</name>
</gene>
<reference key="1">
    <citation type="journal article" date="1999" name="Nature">
        <title>Evidence for lateral gene transfer between Archaea and Bacteria from genome sequence of Thermotoga maritima.</title>
        <authorList>
            <person name="Nelson K.E."/>
            <person name="Clayton R.A."/>
            <person name="Gill S.R."/>
            <person name="Gwinn M.L."/>
            <person name="Dodson R.J."/>
            <person name="Haft D.H."/>
            <person name="Hickey E.K."/>
            <person name="Peterson J.D."/>
            <person name="Nelson W.C."/>
            <person name="Ketchum K.A."/>
            <person name="McDonald L.A."/>
            <person name="Utterback T.R."/>
            <person name="Malek J.A."/>
            <person name="Linher K.D."/>
            <person name="Garrett M.M."/>
            <person name="Stewart A.M."/>
            <person name="Cotton M.D."/>
            <person name="Pratt M.S."/>
            <person name="Phillips C.A."/>
            <person name="Richardson D.L."/>
            <person name="Heidelberg J.F."/>
            <person name="Sutton G.G."/>
            <person name="Fleischmann R.D."/>
            <person name="Eisen J.A."/>
            <person name="White O."/>
            <person name="Salzberg S.L."/>
            <person name="Smith H.O."/>
            <person name="Venter J.C."/>
            <person name="Fraser C.M."/>
        </authorList>
    </citation>
    <scope>NUCLEOTIDE SEQUENCE [LARGE SCALE GENOMIC DNA]</scope>
    <source>
        <strain>ATCC 43589 / DSM 3109 / JCM 10099 / NBRC 100826 / MSB8</strain>
    </source>
</reference>
<reference key="2">
    <citation type="journal article" date="2001" name="J. Biol. Chem.">
        <title>Imidazole glycerol phosphate synthase from Thermotoga maritima. Quaternary structure, steady-state kinetics, and reaction mechanism of the bienzyme complex.</title>
        <authorList>
            <person name="Beismann-Driemeyer S."/>
            <person name="Sterner R."/>
        </authorList>
    </citation>
    <scope>PROTEIN SEQUENCE OF N-TERMINUS</scope>
    <scope>BIOPHYSICOCHEMICAL PROPERTIES</scope>
</reference>
<reference key="3">
    <citation type="journal article" date="2002" name="Proteins">
        <title>Crystal structure of glutamine amidotransferase from Thermotoga maritima.</title>
        <authorList>
            <person name="Korolev S."/>
            <person name="Skarina T."/>
            <person name="Evdokimova E."/>
            <person name="Beasley S."/>
            <person name="Edwards A."/>
            <person name="Joachimiak A."/>
            <person name="Savchenko A."/>
        </authorList>
    </citation>
    <scope>X-RAY CRYSTALLOGRAPHY (2.8 ANGSTROMS)</scope>
</reference>
<reference key="4">
    <citation type="journal article" date="2002" name="Structure">
        <title>Structural evidence for ammonia tunneling across the (beta alpha)(8) barrel of the imidazole glycerol phosphate synthase bienzyme complex.</title>
        <authorList>
            <person name="Douangamath A."/>
            <person name="Walker M."/>
            <person name="Beismann-Driemeyer S."/>
            <person name="Vega-Fernandez M.C."/>
            <person name="Sterner R."/>
            <person name="Wilmanns M."/>
        </authorList>
    </citation>
    <scope>X-RAY CRYSTALLOGRAPHY (2.4 ANGSTROMS)</scope>
</reference>
<feature type="chain" id="PRO_0000152437" description="Imidazole glycerol phosphate synthase subunit HisH">
    <location>
        <begin position="1"/>
        <end position="201"/>
    </location>
</feature>
<feature type="domain" description="Glutamine amidotransferase type-1">
    <location>
        <begin position="2"/>
        <end position="201"/>
    </location>
</feature>
<feature type="active site" description="Nucleophile">
    <location>
        <position position="84"/>
    </location>
</feature>
<feature type="active site">
    <location>
        <position position="178"/>
    </location>
</feature>
<feature type="active site">
    <location>
        <position position="180"/>
    </location>
</feature>
<feature type="strand" evidence="4">
    <location>
        <begin position="1"/>
        <end position="6"/>
    </location>
</feature>
<feature type="strand" evidence="3">
    <location>
        <begin position="9"/>
        <end position="11"/>
    </location>
</feature>
<feature type="helix" evidence="4">
    <location>
        <begin position="14"/>
        <end position="23"/>
    </location>
</feature>
<feature type="turn" evidence="4">
    <location>
        <begin position="24"/>
        <end position="26"/>
    </location>
</feature>
<feature type="strand" evidence="4">
    <location>
        <begin position="28"/>
        <end position="35"/>
    </location>
</feature>
<feature type="strand" evidence="4">
    <location>
        <begin position="44"/>
        <end position="48"/>
    </location>
</feature>
<feature type="helix" evidence="4">
    <location>
        <begin position="54"/>
        <end position="63"/>
    </location>
</feature>
<feature type="helix" evidence="4">
    <location>
        <begin position="67"/>
        <end position="75"/>
    </location>
</feature>
<feature type="strand" evidence="4">
    <location>
        <begin position="79"/>
        <end position="83"/>
    </location>
</feature>
<feature type="helix" evidence="4">
    <location>
        <begin position="85"/>
        <end position="89"/>
    </location>
</feature>
<feature type="strand" evidence="2">
    <location>
        <begin position="91"/>
        <end position="94"/>
    </location>
</feature>
<feature type="strand" evidence="2">
    <location>
        <begin position="97"/>
        <end position="101"/>
    </location>
</feature>
<feature type="strand" evidence="4">
    <location>
        <begin position="105"/>
        <end position="107"/>
    </location>
</feature>
<feature type="strand" evidence="4">
    <location>
        <begin position="109"/>
        <end position="112"/>
    </location>
</feature>
<feature type="strand" evidence="4">
    <location>
        <begin position="119"/>
        <end position="132"/>
    </location>
</feature>
<feature type="strand" evidence="4">
    <location>
        <begin position="135"/>
        <end position="146"/>
    </location>
</feature>
<feature type="helix" evidence="4">
    <location>
        <begin position="149"/>
        <end position="151"/>
    </location>
</feature>
<feature type="strand" evidence="4">
    <location>
        <begin position="152"/>
        <end position="158"/>
    </location>
</feature>
<feature type="strand" evidence="4">
    <location>
        <begin position="161"/>
        <end position="169"/>
    </location>
</feature>
<feature type="strand" evidence="4">
    <location>
        <begin position="172"/>
        <end position="177"/>
    </location>
</feature>
<feature type="helix" evidence="4">
    <location>
        <begin position="179"/>
        <end position="181"/>
    </location>
</feature>
<feature type="helix" evidence="4">
    <location>
        <begin position="183"/>
        <end position="199"/>
    </location>
</feature>